<accession>P0DW89</accession>
<accession>Q5BK76</accession>
<reference key="1">
    <citation type="journal article" date="2004" name="Nature">
        <title>Genome sequence of the Brown Norway rat yields insights into mammalian evolution.</title>
        <authorList>
            <person name="Gibbs R.A."/>
            <person name="Weinstock G.M."/>
            <person name="Metzker M.L."/>
            <person name="Muzny D.M."/>
            <person name="Sodergren E.J."/>
            <person name="Scherer S."/>
            <person name="Scott G."/>
            <person name="Steffen D."/>
            <person name="Worley K.C."/>
            <person name="Burch P.E."/>
            <person name="Okwuonu G."/>
            <person name="Hines S."/>
            <person name="Lewis L."/>
            <person name="Deramo C."/>
            <person name="Delgado O."/>
            <person name="Dugan-Rocha S."/>
            <person name="Miner G."/>
            <person name="Morgan M."/>
            <person name="Hawes A."/>
            <person name="Gill R."/>
            <person name="Holt R.A."/>
            <person name="Adams M.D."/>
            <person name="Amanatides P.G."/>
            <person name="Baden-Tillson H."/>
            <person name="Barnstead M."/>
            <person name="Chin S."/>
            <person name="Evans C.A."/>
            <person name="Ferriera S."/>
            <person name="Fosler C."/>
            <person name="Glodek A."/>
            <person name="Gu Z."/>
            <person name="Jennings D."/>
            <person name="Kraft C.L."/>
            <person name="Nguyen T."/>
            <person name="Pfannkoch C.M."/>
            <person name="Sitter C."/>
            <person name="Sutton G.G."/>
            <person name="Venter J.C."/>
            <person name="Woodage T."/>
            <person name="Smith D."/>
            <person name="Lee H.-M."/>
            <person name="Gustafson E."/>
            <person name="Cahill P."/>
            <person name="Kana A."/>
            <person name="Doucette-Stamm L."/>
            <person name="Weinstock K."/>
            <person name="Fechtel K."/>
            <person name="Weiss R.B."/>
            <person name="Dunn D.M."/>
            <person name="Green E.D."/>
            <person name="Blakesley R.W."/>
            <person name="Bouffard G.G."/>
            <person name="De Jong P.J."/>
            <person name="Osoegawa K."/>
            <person name="Zhu B."/>
            <person name="Marra M."/>
            <person name="Schein J."/>
            <person name="Bosdet I."/>
            <person name="Fjell C."/>
            <person name="Jones S."/>
            <person name="Krzywinski M."/>
            <person name="Mathewson C."/>
            <person name="Siddiqui A."/>
            <person name="Wye N."/>
            <person name="McPherson J."/>
            <person name="Zhao S."/>
            <person name="Fraser C.M."/>
            <person name="Shetty J."/>
            <person name="Shatsman S."/>
            <person name="Geer K."/>
            <person name="Chen Y."/>
            <person name="Abramzon S."/>
            <person name="Nierman W.C."/>
            <person name="Havlak P.H."/>
            <person name="Chen R."/>
            <person name="Durbin K.J."/>
            <person name="Egan A."/>
            <person name="Ren Y."/>
            <person name="Song X.-Z."/>
            <person name="Li B."/>
            <person name="Liu Y."/>
            <person name="Qin X."/>
            <person name="Cawley S."/>
            <person name="Cooney A.J."/>
            <person name="D'Souza L.M."/>
            <person name="Martin K."/>
            <person name="Wu J.Q."/>
            <person name="Gonzalez-Garay M.L."/>
            <person name="Jackson A.R."/>
            <person name="Kalafus K.J."/>
            <person name="McLeod M.P."/>
            <person name="Milosavljevic A."/>
            <person name="Virk D."/>
            <person name="Volkov A."/>
            <person name="Wheeler D.A."/>
            <person name="Zhang Z."/>
            <person name="Bailey J.A."/>
            <person name="Eichler E.E."/>
            <person name="Tuzun E."/>
            <person name="Birney E."/>
            <person name="Mongin E."/>
            <person name="Ureta-Vidal A."/>
            <person name="Woodwark C."/>
            <person name="Zdobnov E."/>
            <person name="Bork P."/>
            <person name="Suyama M."/>
            <person name="Torrents D."/>
            <person name="Alexandersson M."/>
            <person name="Trask B.J."/>
            <person name="Young J.M."/>
            <person name="Huang H."/>
            <person name="Wang H."/>
            <person name="Xing H."/>
            <person name="Daniels S."/>
            <person name="Gietzen D."/>
            <person name="Schmidt J."/>
            <person name="Stevens K."/>
            <person name="Vitt U."/>
            <person name="Wingrove J."/>
            <person name="Camara F."/>
            <person name="Mar Alba M."/>
            <person name="Abril J.F."/>
            <person name="Guigo R."/>
            <person name="Smit A."/>
            <person name="Dubchak I."/>
            <person name="Rubin E.M."/>
            <person name="Couronne O."/>
            <person name="Poliakov A."/>
            <person name="Huebner N."/>
            <person name="Ganten D."/>
            <person name="Goesele C."/>
            <person name="Hummel O."/>
            <person name="Kreitler T."/>
            <person name="Lee Y.-A."/>
            <person name="Monti J."/>
            <person name="Schulz H."/>
            <person name="Zimdahl H."/>
            <person name="Himmelbauer H."/>
            <person name="Lehrach H."/>
            <person name="Jacob H.J."/>
            <person name="Bromberg S."/>
            <person name="Gullings-Handley J."/>
            <person name="Jensen-Seaman M.I."/>
            <person name="Kwitek A.E."/>
            <person name="Lazar J."/>
            <person name="Pasko D."/>
            <person name="Tonellato P.J."/>
            <person name="Twigger S."/>
            <person name="Ponting C.P."/>
            <person name="Duarte J.M."/>
            <person name="Rice S."/>
            <person name="Goodstadt L."/>
            <person name="Beatson S.A."/>
            <person name="Emes R.D."/>
            <person name="Winter E.E."/>
            <person name="Webber C."/>
            <person name="Brandt P."/>
            <person name="Nyakatura G."/>
            <person name="Adetobi M."/>
            <person name="Chiaromonte F."/>
            <person name="Elnitski L."/>
            <person name="Eswara P."/>
            <person name="Hardison R.C."/>
            <person name="Hou M."/>
            <person name="Kolbe D."/>
            <person name="Makova K."/>
            <person name="Miller W."/>
            <person name="Nekrutenko A."/>
            <person name="Riemer C."/>
            <person name="Schwartz S."/>
            <person name="Taylor J."/>
            <person name="Yang S."/>
            <person name="Zhang Y."/>
            <person name="Lindpaintner K."/>
            <person name="Andrews T.D."/>
            <person name="Caccamo M."/>
            <person name="Clamp M."/>
            <person name="Clarke L."/>
            <person name="Curwen V."/>
            <person name="Durbin R.M."/>
            <person name="Eyras E."/>
            <person name="Searle S.M."/>
            <person name="Cooper G.M."/>
            <person name="Batzoglou S."/>
            <person name="Brudno M."/>
            <person name="Sidow A."/>
            <person name="Stone E.A."/>
            <person name="Payseur B.A."/>
            <person name="Bourque G."/>
            <person name="Lopez-Otin C."/>
            <person name="Puente X.S."/>
            <person name="Chakrabarti K."/>
            <person name="Chatterji S."/>
            <person name="Dewey C."/>
            <person name="Pachter L."/>
            <person name="Bray N."/>
            <person name="Yap V.B."/>
            <person name="Caspi A."/>
            <person name="Tesler G."/>
            <person name="Pevzner P.A."/>
            <person name="Haussler D."/>
            <person name="Roskin K.M."/>
            <person name="Baertsch R."/>
            <person name="Clawson H."/>
            <person name="Furey T.S."/>
            <person name="Hinrichs A.S."/>
            <person name="Karolchik D."/>
            <person name="Kent W.J."/>
            <person name="Rosenbloom K.R."/>
            <person name="Trumbower H."/>
            <person name="Weirauch M."/>
            <person name="Cooper D.N."/>
            <person name="Stenson P.D."/>
            <person name="Ma B."/>
            <person name="Brent M."/>
            <person name="Arumugam M."/>
            <person name="Shteynberg D."/>
            <person name="Copley R.R."/>
            <person name="Taylor M.S."/>
            <person name="Riethman H."/>
            <person name="Mudunuri U."/>
            <person name="Peterson J."/>
            <person name="Guyer M."/>
            <person name="Felsenfeld A."/>
            <person name="Old S."/>
            <person name="Mockrin S."/>
            <person name="Collins F.S."/>
        </authorList>
    </citation>
    <scope>NUCLEOTIDE SEQUENCE [LARGE SCALE GENOMIC DNA]</scope>
    <source>
        <strain>Brown Norway</strain>
    </source>
</reference>
<name>ZTRF1_RAT</name>
<organism>
    <name type="scientific">Rattus norvegicus</name>
    <name type="common">Rat</name>
    <dbReference type="NCBI Taxonomy" id="10116"/>
    <lineage>
        <taxon>Eukaryota</taxon>
        <taxon>Metazoa</taxon>
        <taxon>Chordata</taxon>
        <taxon>Craniata</taxon>
        <taxon>Vertebrata</taxon>
        <taxon>Euteleostomi</taxon>
        <taxon>Mammalia</taxon>
        <taxon>Eutheria</taxon>
        <taxon>Euarchontoglires</taxon>
        <taxon>Glires</taxon>
        <taxon>Rodentia</taxon>
        <taxon>Myomorpha</taxon>
        <taxon>Muroidea</taxon>
        <taxon>Muridae</taxon>
        <taxon>Murinae</taxon>
        <taxon>Rattus</taxon>
    </lineage>
</organism>
<gene>
    <name evidence="6" type="primary">Zftraf1</name>
    <name type="synonym">Cyhr1</name>
</gene>
<keyword id="KW-0963">Cytoplasm</keyword>
<keyword id="KW-0479">Metal-binding</keyword>
<keyword id="KW-1185">Reference proteome</keyword>
<keyword id="KW-0862">Zinc</keyword>
<keyword id="KW-0863">Zinc-finger</keyword>
<feature type="chain" id="PRO_0000328854" description="Zinc finger TRAF-type-containing protein 1">
    <location>
        <begin position="1"/>
        <end position="399"/>
    </location>
</feature>
<feature type="zinc finger region" description="RING-type; degenerate" evidence="2">
    <location>
        <begin position="106"/>
        <end position="151"/>
    </location>
</feature>
<feature type="zinc finger region" description="TRAF-type" evidence="3">
    <location>
        <begin position="152"/>
        <end position="210"/>
    </location>
</feature>
<feature type="region of interest" description="Disordered" evidence="4">
    <location>
        <begin position="1"/>
        <end position="20"/>
    </location>
</feature>
<feature type="compositionally biased region" description="Gly residues" evidence="4">
    <location>
        <begin position="1"/>
        <end position="13"/>
    </location>
</feature>
<comment type="subunit">
    <text evidence="1">Interacts with LGALS3.</text>
</comment>
<comment type="subcellular location">
    <subcellularLocation>
        <location evidence="1">Cytoplasm</location>
    </subcellularLocation>
    <subcellularLocation>
        <location evidence="1">Cytoplasm</location>
        <location evidence="1">Perinuclear region</location>
    </subcellularLocation>
    <text evidence="1">Shows a prominent perinuclear and cytoplasmic localization.</text>
</comment>
<comment type="similarity">
    <text evidence="5">Belongs to the ZFTRAF1 family.</text>
</comment>
<evidence type="ECO:0000250" key="1">
    <source>
        <dbReference type="UniProtKB" id="Q9QXA1"/>
    </source>
</evidence>
<evidence type="ECO:0000255" key="2">
    <source>
        <dbReference type="PROSITE-ProRule" id="PRU00175"/>
    </source>
</evidence>
<evidence type="ECO:0000255" key="3">
    <source>
        <dbReference type="PROSITE-ProRule" id="PRU00207"/>
    </source>
</evidence>
<evidence type="ECO:0000256" key="4">
    <source>
        <dbReference type="SAM" id="MobiDB-lite"/>
    </source>
</evidence>
<evidence type="ECO:0000305" key="5"/>
<evidence type="ECO:0000312" key="6">
    <source>
        <dbReference type="RGD" id="2318728"/>
    </source>
</evidence>
<dbReference type="EMBL" id="AC119473">
    <property type="status" value="NOT_ANNOTATED_CDS"/>
    <property type="molecule type" value="Genomic_DNA"/>
</dbReference>
<dbReference type="RefSeq" id="NP_001395050.1">
    <property type="nucleotide sequence ID" value="NM_001408121.1"/>
</dbReference>
<dbReference type="RefSeq" id="XP_002729874.1">
    <property type="nucleotide sequence ID" value="XM_002729828.5"/>
</dbReference>
<dbReference type="PhosphoSitePlus" id="P0DW89"/>
<dbReference type="Ensembl" id="ENSRNOT00000111651.1">
    <property type="protein sequence ID" value="ENSRNOP00000084336.1"/>
    <property type="gene ID" value="ENSRNOG00000014811.10"/>
</dbReference>
<dbReference type="GeneID" id="108348051"/>
<dbReference type="AGR" id="RGD:11425062"/>
<dbReference type="RGD" id="2318728">
    <property type="gene designation" value="Zftraf1"/>
</dbReference>
<dbReference type="GeneTree" id="ENSGT00390000018258"/>
<dbReference type="OMA" id="HERPEHE"/>
<dbReference type="OrthoDB" id="10062218at2759"/>
<dbReference type="PRO" id="PR:P0DW89"/>
<dbReference type="Proteomes" id="UP000002494">
    <property type="component" value="Chromosome 7"/>
</dbReference>
<dbReference type="GO" id="GO:0005634">
    <property type="term" value="C:nucleus"/>
    <property type="evidence" value="ECO:0000318"/>
    <property type="project" value="GO_Central"/>
</dbReference>
<dbReference type="GO" id="GO:0048471">
    <property type="term" value="C:perinuclear region of cytoplasm"/>
    <property type="evidence" value="ECO:0007669"/>
    <property type="project" value="UniProtKB-SubCell"/>
</dbReference>
<dbReference type="GO" id="GO:0008270">
    <property type="term" value="F:zinc ion binding"/>
    <property type="evidence" value="ECO:0007669"/>
    <property type="project" value="UniProtKB-KW"/>
</dbReference>
<dbReference type="CDD" id="cd22861">
    <property type="entry name" value="CYHR1_C"/>
    <property type="match status" value="1"/>
</dbReference>
<dbReference type="CDD" id="cd16505">
    <property type="entry name" value="RING-HC_CYHR1"/>
    <property type="match status" value="1"/>
</dbReference>
<dbReference type="FunFam" id="3.30.40.10:FF:000498">
    <property type="entry name" value="Cysteine and histidine rich 1"/>
    <property type="match status" value="1"/>
</dbReference>
<dbReference type="Gene3D" id="3.30.40.10">
    <property type="entry name" value="Zinc/RING finger domain, C3HC4 (zinc finger)"/>
    <property type="match status" value="2"/>
</dbReference>
<dbReference type="InterPro" id="IPR049548">
    <property type="entry name" value="Sina-like_RING"/>
</dbReference>
<dbReference type="InterPro" id="IPR039338">
    <property type="entry name" value="ZFTRAF1"/>
</dbReference>
<dbReference type="InterPro" id="IPR001841">
    <property type="entry name" value="Znf_RING"/>
</dbReference>
<dbReference type="InterPro" id="IPR013083">
    <property type="entry name" value="Znf_RING/FYVE/PHD"/>
</dbReference>
<dbReference type="InterPro" id="IPR001293">
    <property type="entry name" value="Znf_TRAF"/>
</dbReference>
<dbReference type="PANTHER" id="PTHR23059">
    <property type="entry name" value="CYSTEINE AND HISTIDINE-RICH PROTEIN 1"/>
    <property type="match status" value="1"/>
</dbReference>
<dbReference type="PANTHER" id="PTHR23059:SF4">
    <property type="entry name" value="ZINC FINGER TRAF-TYPE-CONTAINING PROTEIN 1"/>
    <property type="match status" value="1"/>
</dbReference>
<dbReference type="Pfam" id="PF21362">
    <property type="entry name" value="Sina_RING"/>
    <property type="match status" value="1"/>
</dbReference>
<dbReference type="SUPFAM" id="SSF57850">
    <property type="entry name" value="RING/U-box"/>
    <property type="match status" value="1"/>
</dbReference>
<dbReference type="SUPFAM" id="SSF49599">
    <property type="entry name" value="TRAF domain-like"/>
    <property type="match status" value="1"/>
</dbReference>
<dbReference type="PROSITE" id="PS50089">
    <property type="entry name" value="ZF_RING_2"/>
    <property type="match status" value="1"/>
</dbReference>
<dbReference type="PROSITE" id="PS50145">
    <property type="entry name" value="ZF_TRAF"/>
    <property type="match status" value="1"/>
</dbReference>
<proteinExistence type="inferred from homology"/>
<sequence>MSGAEEAGGGGPAAGPAGAVPAGVGVGVGPGAAAGPAAAALGEAAGPGIPDEAGLAGARQLQEAAGDPDAPPKKRLRAAEAAEAAAAAVAAGSGKLEERLYSVLCCTVCLDLPKASVYQCTNGHLMCAGCFIHLLADARLKEEQATCPNCRCEISKSLCCRNLAVEKAVSELPSECGFCLRQFPRSLLERHQKEECQDRVTQCKYKRIGCPWHGPFHELTVHEAACAHPTKTGNELMEILDEMDQSHRKEMQLYNSIFSLLSFEKIGYTEVQFRPYRTDDFITRLYYETPRFTVLNQTWVLKARVNDSERNPNLSCKRTLSFQLLLKSKVTAPLECSFLLLKGPYDDVRISPVIYHFVFTNESNETDYVPLPIIDSVECNKLLAAKNINLRLFLFQIQK</sequence>
<protein>
    <recommendedName>
        <fullName evidence="5">Zinc finger TRAF-type-containing protein 1</fullName>
    </recommendedName>
    <alternativeName>
        <fullName>Cysteine and histidine-rich protein 1</fullName>
    </alternativeName>
</protein>